<evidence type="ECO:0000250" key="1">
    <source>
        <dbReference type="UniProtKB" id="Q9D1P2"/>
    </source>
</evidence>
<evidence type="ECO:0000250" key="2">
    <source>
        <dbReference type="UniProtKB" id="Q9HCI7"/>
    </source>
</evidence>
<evidence type="ECO:0000255" key="3">
    <source>
        <dbReference type="PROSITE-ProRule" id="PRU00175"/>
    </source>
</evidence>
<evidence type="ECO:0000255" key="4">
    <source>
        <dbReference type="PROSITE-ProRule" id="PRU01396"/>
    </source>
</evidence>
<evidence type="ECO:0000256" key="5">
    <source>
        <dbReference type="SAM" id="MobiDB-lite"/>
    </source>
</evidence>
<evidence type="ECO:0000269" key="6">
    <source>
    </source>
</evidence>
<evidence type="ECO:0000269" key="7">
    <source>
    </source>
</evidence>
<evidence type="ECO:0000303" key="8">
    <source>
    </source>
</evidence>
<evidence type="ECO:0000303" key="9">
    <source>
    </source>
</evidence>
<evidence type="ECO:0000305" key="10"/>
<evidence type="ECO:0000312" key="11">
    <source>
        <dbReference type="MGI" id="MGI:1925103"/>
    </source>
</evidence>
<comment type="function">
    <text evidence="1 2 6 7">Non-catalytic component of the MSL histone acetyltransferase complex, a multiprotein complex that mediates the majority of histone H4 acetylation at 'Lys-16' (H4K16ac), an epigenetic mark that prevents chromatin compaction (PubMed:24842875). The MSL complex is required for chromosome stability and genome integrity by maintaining homeostatic levels of H4K16ac (By similarity). The MSL complex is also involved in gene dosage by promoting up-regulation of genes expressed by the X chromosome (By similarity). X up-regulation is required to compensate for autosomal biallelic expression (By similarity). The MSL complex also participates in gene dosage compensation by promoting expression of Tsix non-coding RNA (PubMed:24842875). MSL2 plays a key role in gene dosage by ensuring biallelic expression of a subset of dosage-sensitive genes, including many haploinsufficient genes (PubMed:38030723). Acts by promoting promoter-enhancer contacts, thereby preventing DNA methylation of one allele and creating a methylation-free environment for methylation-sensitive transcription factors such as SP1, KANSL1 and KANSL3 (PubMed:38030723). Also acts as an E3 ubiquitin ligase that promotes monoubiquitination of histone H2B at 'Lys-35' (H2BK34Ub), but not that of H2A (PubMed:38030723). This activity is greatly enhanced by heterodimerization with MSL1 (By similarity). H2B ubiquitination in turn stimulates histone H3 methylation at 'Lys-4' (H3K4me) and 'Lys-79' (H3K79me) and leads to gene activation, including that of HOXA9 and MEIS1 (By similarity).</text>
</comment>
<comment type="catalytic activity">
    <reaction evidence="7">
        <text>S-ubiquitinyl-[E2 ubiquitin-conjugating enzyme]-L-cysteine + [acceptor protein]-L-lysine = [E2 ubiquitin-conjugating enzyme]-L-cysteine + N(6)-ubiquitinyl-[acceptor protein]-L-lysine.</text>
        <dbReference type="EC" id="2.3.2.27"/>
    </reaction>
</comment>
<comment type="pathway">
    <text evidence="7">Protein modification; protein ubiquitination.</text>
</comment>
<comment type="subunit">
    <text evidence="2 6 7">Component of a multisubunit histone acetyltransferase complex (MSL) at least composed of the KAT8/MOF/MYST1, MSL1/hampin, MSL2 and MSL3 (PubMed:24842875, PubMed:38030723). Forms a MSL heterotetrameric core with MSL1 (By similarity).</text>
</comment>
<comment type="subcellular location">
    <subcellularLocation>
        <location evidence="7">Nucleus</location>
    </subcellularLocation>
    <subcellularLocation>
        <location evidence="7">Chromosome</location>
    </subcellularLocation>
    <text evidence="7">Associates with both promoters and enhancers of target genes, maintaining promoter-enhancer contacts.</text>
</comment>
<comment type="disruption phenotype">
    <text evidence="7">Perinatal lethality (PubMed:38030723). Both male and female embryos show developmental defects ranging from mild to severe, including eye malformations hemorrhage, and brain and kidney defects (PubMed:38030723). Defects are probably caused by defects in gene dosage and loss of biallelic expression of target genes: in mutant cells, one allele remains active, retaining active histone modifications and transcription factor-binding, whereas the other allele is silenced, exhibiting loss of promoter-enhancer contacts and the acquisition of DNA methylation (PubMed:38030723).</text>
</comment>
<comment type="similarity">
    <text evidence="10">Belongs to the MSL2 family.</text>
</comment>
<comment type="sequence caution" evidence="10">
    <conflict type="erroneous initiation">
        <sequence resource="EMBL-CDS" id="BAD32486"/>
    </conflict>
    <text>Extended N-terminus.</text>
</comment>
<organism>
    <name type="scientific">Mus musculus</name>
    <name type="common">Mouse</name>
    <dbReference type="NCBI Taxonomy" id="10090"/>
    <lineage>
        <taxon>Eukaryota</taxon>
        <taxon>Metazoa</taxon>
        <taxon>Chordata</taxon>
        <taxon>Craniata</taxon>
        <taxon>Vertebrata</taxon>
        <taxon>Euteleostomi</taxon>
        <taxon>Mammalia</taxon>
        <taxon>Eutheria</taxon>
        <taxon>Euarchontoglires</taxon>
        <taxon>Glires</taxon>
        <taxon>Rodentia</taxon>
        <taxon>Myomorpha</taxon>
        <taxon>Muroidea</taxon>
        <taxon>Muridae</taxon>
        <taxon>Murinae</taxon>
        <taxon>Mus</taxon>
        <taxon>Mus</taxon>
    </lineage>
</organism>
<keyword id="KW-0156">Chromatin regulator</keyword>
<keyword id="KW-0158">Chromosome</keyword>
<keyword id="KW-0227">DNA damage</keyword>
<keyword id="KW-1017">Isopeptide bond</keyword>
<keyword id="KW-0479">Metal-binding</keyword>
<keyword id="KW-0539">Nucleus</keyword>
<keyword id="KW-0597">Phosphoprotein</keyword>
<keyword id="KW-1185">Reference proteome</keyword>
<keyword id="KW-0808">Transferase</keyword>
<keyword id="KW-0832">Ubl conjugation</keyword>
<keyword id="KW-0833">Ubl conjugation pathway</keyword>
<keyword id="KW-0862">Zinc</keyword>
<keyword id="KW-0863">Zinc-finger</keyword>
<gene>
    <name evidence="9 11" type="primary">Msl2</name>
    <name evidence="8" type="synonym">Kiaa1585</name>
    <name type="synonym">Msl2l1</name>
    <name type="synonym">Rnf184</name>
</gene>
<accession>Q69ZF8</accession>
<accession>Q497U7</accession>
<accession>Q8CBI7</accession>
<protein>
    <recommendedName>
        <fullName evidence="10">E3 ubiquitin-protein ligase MSL2</fullName>
        <ecNumber evidence="2">2.3.2.27</ecNumber>
    </recommendedName>
    <alternativeName>
        <fullName>Male-specific lethal 2-like 1</fullName>
        <shortName>MSL2-like 1</shortName>
    </alternativeName>
    <alternativeName>
        <fullName evidence="9">Male-specific lethal-2 homolog</fullName>
        <shortName evidence="9">MSL-2</shortName>
    </alternativeName>
    <alternativeName>
        <fullName>Male-specific lethal-2 homolog 1</fullName>
    </alternativeName>
    <alternativeName>
        <fullName>RING finger protein 184</fullName>
    </alternativeName>
</protein>
<sequence length="577" mass="62538">MNPVNATALYISASRLVLNYDPGDPKAFTEINRLLPYFRQSLSCCVCGHLLQDPIAPTNSTCQHYVCKTCKGKKMMMKPSCSWCKDYEQFEENKQLSILVNCYKKLCEYITQTTLARDIIEAVDCSSDILALLNDGSLFCEETEKPSDSSFTLCLTHSPLPSTSEPTADPQASLSPMSESTLSIAIGSSVINGLPTYNGLSIDRFGINIPSPEHPNTIDVCNTVDIKTEDLSDNLPPVCDTVATDLCSTGIDICSFSEDIKPGDSLLLSVEEVLRSLETVSNTEVCCPNLQPNLEATVSNGPFLQLSSQSLSHNVFMSTSPALHGLSCTAATPKVAKLNRKRSRSESDSEKVQPLPISTIIRGPTLGASAPVTVKRESKISLQPIATVPNGGTTPKISKTVLLSTKSMKKSHEHGSKKSHSKSKPGILKKDKAVKEKMPSHHFMPGSPTKTVYKKPQEKKGCKCGRATQNPSVLTCRGQRCPCYSNRKACLDCICRGCQNSYMANGEKKLEAFAVPEKALEQTRLTLGINVTSIAVRNASTSTSVINVTGSPVTTFLAASTHDDKSLDEAIDMRFDC</sequence>
<reference key="1">
    <citation type="journal article" date="2004" name="DNA Res.">
        <title>Prediction of the coding sequences of mouse homologues of KIAA gene: IV. The complete nucleotide sequences of 500 mouse KIAA-homologous cDNAs identified by screening of terminal sequences of cDNA clones randomly sampled from size-fractionated libraries.</title>
        <authorList>
            <person name="Okazaki N."/>
            <person name="Kikuno R."/>
            <person name="Ohara R."/>
            <person name="Inamoto S."/>
            <person name="Koseki H."/>
            <person name="Hiraoka S."/>
            <person name="Saga Y."/>
            <person name="Seino S."/>
            <person name="Nishimura M."/>
            <person name="Kaisho T."/>
            <person name="Hoshino K."/>
            <person name="Kitamura H."/>
            <person name="Nagase T."/>
            <person name="Ohara O."/>
            <person name="Koga H."/>
        </authorList>
    </citation>
    <scope>NUCLEOTIDE SEQUENCE [LARGE SCALE MRNA]</scope>
    <source>
        <tissue>Embryonic tail</tissue>
    </source>
</reference>
<reference key="2">
    <citation type="journal article" date="2004" name="Genome Res.">
        <title>The status, quality, and expansion of the NIH full-length cDNA project: the Mammalian Gene Collection (MGC).</title>
        <authorList>
            <consortium name="The MGC Project Team"/>
        </authorList>
    </citation>
    <scope>NUCLEOTIDE SEQUENCE [LARGE SCALE MRNA] OF 111-577</scope>
    <source>
        <tissue>Placenta</tissue>
    </source>
</reference>
<reference key="3">
    <citation type="journal article" date="2005" name="Science">
        <title>The transcriptional landscape of the mammalian genome.</title>
        <authorList>
            <person name="Carninci P."/>
            <person name="Kasukawa T."/>
            <person name="Katayama S."/>
            <person name="Gough J."/>
            <person name="Frith M.C."/>
            <person name="Maeda N."/>
            <person name="Oyama R."/>
            <person name="Ravasi T."/>
            <person name="Lenhard B."/>
            <person name="Wells C."/>
            <person name="Kodzius R."/>
            <person name="Shimokawa K."/>
            <person name="Bajic V.B."/>
            <person name="Brenner S.E."/>
            <person name="Batalov S."/>
            <person name="Forrest A.R."/>
            <person name="Zavolan M."/>
            <person name="Davis M.J."/>
            <person name="Wilming L.G."/>
            <person name="Aidinis V."/>
            <person name="Allen J.E."/>
            <person name="Ambesi-Impiombato A."/>
            <person name="Apweiler R."/>
            <person name="Aturaliya R.N."/>
            <person name="Bailey T.L."/>
            <person name="Bansal M."/>
            <person name="Baxter L."/>
            <person name="Beisel K.W."/>
            <person name="Bersano T."/>
            <person name="Bono H."/>
            <person name="Chalk A.M."/>
            <person name="Chiu K.P."/>
            <person name="Choudhary V."/>
            <person name="Christoffels A."/>
            <person name="Clutterbuck D.R."/>
            <person name="Crowe M.L."/>
            <person name="Dalla E."/>
            <person name="Dalrymple B.P."/>
            <person name="de Bono B."/>
            <person name="Della Gatta G."/>
            <person name="di Bernardo D."/>
            <person name="Down T."/>
            <person name="Engstrom P."/>
            <person name="Fagiolini M."/>
            <person name="Faulkner G."/>
            <person name="Fletcher C.F."/>
            <person name="Fukushima T."/>
            <person name="Furuno M."/>
            <person name="Futaki S."/>
            <person name="Gariboldi M."/>
            <person name="Georgii-Hemming P."/>
            <person name="Gingeras T.R."/>
            <person name="Gojobori T."/>
            <person name="Green R.E."/>
            <person name="Gustincich S."/>
            <person name="Harbers M."/>
            <person name="Hayashi Y."/>
            <person name="Hensch T.K."/>
            <person name="Hirokawa N."/>
            <person name="Hill D."/>
            <person name="Huminiecki L."/>
            <person name="Iacono M."/>
            <person name="Ikeo K."/>
            <person name="Iwama A."/>
            <person name="Ishikawa T."/>
            <person name="Jakt M."/>
            <person name="Kanapin A."/>
            <person name="Katoh M."/>
            <person name="Kawasawa Y."/>
            <person name="Kelso J."/>
            <person name="Kitamura H."/>
            <person name="Kitano H."/>
            <person name="Kollias G."/>
            <person name="Krishnan S.P."/>
            <person name="Kruger A."/>
            <person name="Kummerfeld S.K."/>
            <person name="Kurochkin I.V."/>
            <person name="Lareau L.F."/>
            <person name="Lazarevic D."/>
            <person name="Lipovich L."/>
            <person name="Liu J."/>
            <person name="Liuni S."/>
            <person name="McWilliam S."/>
            <person name="Madan Babu M."/>
            <person name="Madera M."/>
            <person name="Marchionni L."/>
            <person name="Matsuda H."/>
            <person name="Matsuzawa S."/>
            <person name="Miki H."/>
            <person name="Mignone F."/>
            <person name="Miyake S."/>
            <person name="Morris K."/>
            <person name="Mottagui-Tabar S."/>
            <person name="Mulder N."/>
            <person name="Nakano N."/>
            <person name="Nakauchi H."/>
            <person name="Ng P."/>
            <person name="Nilsson R."/>
            <person name="Nishiguchi S."/>
            <person name="Nishikawa S."/>
            <person name="Nori F."/>
            <person name="Ohara O."/>
            <person name="Okazaki Y."/>
            <person name="Orlando V."/>
            <person name="Pang K.C."/>
            <person name="Pavan W.J."/>
            <person name="Pavesi G."/>
            <person name="Pesole G."/>
            <person name="Petrovsky N."/>
            <person name="Piazza S."/>
            <person name="Reed J."/>
            <person name="Reid J.F."/>
            <person name="Ring B.Z."/>
            <person name="Ringwald M."/>
            <person name="Rost B."/>
            <person name="Ruan Y."/>
            <person name="Salzberg S.L."/>
            <person name="Sandelin A."/>
            <person name="Schneider C."/>
            <person name="Schoenbach C."/>
            <person name="Sekiguchi K."/>
            <person name="Semple C.A."/>
            <person name="Seno S."/>
            <person name="Sessa L."/>
            <person name="Sheng Y."/>
            <person name="Shibata Y."/>
            <person name="Shimada H."/>
            <person name="Shimada K."/>
            <person name="Silva D."/>
            <person name="Sinclair B."/>
            <person name="Sperling S."/>
            <person name="Stupka E."/>
            <person name="Sugiura K."/>
            <person name="Sultana R."/>
            <person name="Takenaka Y."/>
            <person name="Taki K."/>
            <person name="Tammoja K."/>
            <person name="Tan S.L."/>
            <person name="Tang S."/>
            <person name="Taylor M.S."/>
            <person name="Tegner J."/>
            <person name="Teichmann S.A."/>
            <person name="Ueda H.R."/>
            <person name="van Nimwegen E."/>
            <person name="Verardo R."/>
            <person name="Wei C.L."/>
            <person name="Yagi K."/>
            <person name="Yamanishi H."/>
            <person name="Zabarovsky E."/>
            <person name="Zhu S."/>
            <person name="Zimmer A."/>
            <person name="Hide W."/>
            <person name="Bult C."/>
            <person name="Grimmond S.M."/>
            <person name="Teasdale R.D."/>
            <person name="Liu E.T."/>
            <person name="Brusic V."/>
            <person name="Quackenbush J."/>
            <person name="Wahlestedt C."/>
            <person name="Mattick J.S."/>
            <person name="Hume D.A."/>
            <person name="Kai C."/>
            <person name="Sasaki D."/>
            <person name="Tomaru Y."/>
            <person name="Fukuda S."/>
            <person name="Kanamori-Katayama M."/>
            <person name="Suzuki M."/>
            <person name="Aoki J."/>
            <person name="Arakawa T."/>
            <person name="Iida J."/>
            <person name="Imamura K."/>
            <person name="Itoh M."/>
            <person name="Kato T."/>
            <person name="Kawaji H."/>
            <person name="Kawagashira N."/>
            <person name="Kawashima T."/>
            <person name="Kojima M."/>
            <person name="Kondo S."/>
            <person name="Konno H."/>
            <person name="Nakano K."/>
            <person name="Ninomiya N."/>
            <person name="Nishio T."/>
            <person name="Okada M."/>
            <person name="Plessy C."/>
            <person name="Shibata K."/>
            <person name="Shiraki T."/>
            <person name="Suzuki S."/>
            <person name="Tagami M."/>
            <person name="Waki K."/>
            <person name="Watahiki A."/>
            <person name="Okamura-Oho Y."/>
            <person name="Suzuki H."/>
            <person name="Kawai J."/>
            <person name="Hayashizaki Y."/>
        </authorList>
    </citation>
    <scope>NUCLEOTIDE SEQUENCE [LARGE SCALE MRNA] OF 422-577</scope>
    <source>
        <strain>C57BL/6J</strain>
        <tissue>Cerebellum</tissue>
    </source>
</reference>
<reference key="4">
    <citation type="journal article" date="2014" name="Elife">
        <title>MOF-associated complexes ensure stem cell identity and Xist repression.</title>
        <authorList>
            <person name="Chelmicki T."/>
            <person name="Duendar F."/>
            <person name="Turley M.J."/>
            <person name="Khanam T."/>
            <person name="Aktas T."/>
            <person name="Ramirez F."/>
            <person name="Gendrel A.V."/>
            <person name="Wright P.R."/>
            <person name="Videm P."/>
            <person name="Backofen R."/>
            <person name="Heard E."/>
            <person name="Manke T."/>
            <person name="Akhtar A."/>
        </authorList>
    </citation>
    <scope>FUNCTION</scope>
    <scope>IDENTIFICATION IN THE MSL COMPLEX</scope>
</reference>
<reference key="5">
    <citation type="journal article" date="2023" name="Nature">
        <title>MSL2 ensures biallelic gene expression in mammals.</title>
        <authorList>
            <person name="Sun Y."/>
            <person name="Wiese M."/>
            <person name="Hmadi R."/>
            <person name="Karayol R."/>
            <person name="Seyfferth J."/>
            <person name="Martinez Greene J.A."/>
            <person name="Erdogdu N.U."/>
            <person name="Deboutte W."/>
            <person name="Arrigoni L."/>
            <person name="Holz H."/>
            <person name="Renschler G."/>
            <person name="Hirsch N."/>
            <person name="Foertsch A."/>
            <person name="Basilicata M.F."/>
            <person name="Stehle T."/>
            <person name="Shvedunova M."/>
            <person name="Bella C."/>
            <person name="Pessoa Rodrigues C."/>
            <person name="Schwalb B."/>
            <person name="Cramer P."/>
            <person name="Manke T."/>
            <person name="Akhtar A."/>
        </authorList>
    </citation>
    <scope>FUNCTION</scope>
    <scope>CATALYTIC ACTIVITY</scope>
    <scope>SUBCELLULAR LOCATION</scope>
    <scope>IDENTIFICATION IN THE MSL COMPLEX</scope>
    <scope>DISRUPTION PHENOTYPE</scope>
    <scope>MUTAGENESIS OF HIS-64</scope>
</reference>
<proteinExistence type="evidence at protein level"/>
<name>MSL2_MOUSE</name>
<dbReference type="EC" id="2.3.2.27" evidence="2"/>
<dbReference type="EMBL" id="AK173208">
    <property type="protein sequence ID" value="BAD32486.1"/>
    <property type="status" value="ALT_INIT"/>
    <property type="molecule type" value="mRNA"/>
</dbReference>
<dbReference type="EMBL" id="BC100371">
    <property type="protein sequence ID" value="AAI00372.1"/>
    <property type="molecule type" value="mRNA"/>
</dbReference>
<dbReference type="EMBL" id="AK035934">
    <property type="protein sequence ID" value="BAC29248.1"/>
    <property type="molecule type" value="mRNA"/>
</dbReference>
<dbReference type="CCDS" id="CCDS85717.1"/>
<dbReference type="RefSeq" id="NP_001093921.1">
    <property type="nucleotide sequence ID" value="NM_001100451.2"/>
</dbReference>
<dbReference type="SMR" id="Q69ZF8"/>
<dbReference type="BioGRID" id="218973">
    <property type="interactions" value="1"/>
</dbReference>
<dbReference type="ComplexPortal" id="CPX-859">
    <property type="entry name" value="MSL histone acetyltransferase complex"/>
</dbReference>
<dbReference type="FunCoup" id="Q69ZF8">
    <property type="interactions" value="2995"/>
</dbReference>
<dbReference type="STRING" id="10090.ENSMUSP00000082270"/>
<dbReference type="GlyGen" id="Q69ZF8">
    <property type="glycosylation" value="1 site, 1 N-linked glycan (1 site)"/>
</dbReference>
<dbReference type="iPTMnet" id="Q69ZF8"/>
<dbReference type="PhosphoSitePlus" id="Q69ZF8"/>
<dbReference type="PaxDb" id="10090-ENSMUSP00000082270"/>
<dbReference type="PeptideAtlas" id="Q69ZF8"/>
<dbReference type="ProteomicsDB" id="295595"/>
<dbReference type="Antibodypedia" id="1091">
    <property type="antibodies" value="174 antibodies from 23 providers"/>
</dbReference>
<dbReference type="Ensembl" id="ENSMUST00000085177.5">
    <property type="protein sequence ID" value="ENSMUSP00000082270.4"/>
    <property type="gene ID" value="ENSMUSG00000066415.5"/>
</dbReference>
<dbReference type="GeneID" id="77853"/>
<dbReference type="KEGG" id="mmu:77853"/>
<dbReference type="UCSC" id="uc033jml.1">
    <property type="organism name" value="mouse"/>
</dbReference>
<dbReference type="AGR" id="MGI:1925103"/>
<dbReference type="CTD" id="55167"/>
<dbReference type="MGI" id="MGI:1925103">
    <property type="gene designation" value="Msl2"/>
</dbReference>
<dbReference type="VEuPathDB" id="HostDB:ENSMUSG00000066415"/>
<dbReference type="eggNOG" id="ENOG502QPJR">
    <property type="taxonomic scope" value="Eukaryota"/>
</dbReference>
<dbReference type="GeneTree" id="ENSGT00390000016814"/>
<dbReference type="HOGENOM" id="CLU_038772_0_0_1"/>
<dbReference type="InParanoid" id="Q69ZF8"/>
<dbReference type="OMA" id="TEVCDSN"/>
<dbReference type="OrthoDB" id="10012174at2759"/>
<dbReference type="PhylomeDB" id="Q69ZF8"/>
<dbReference type="TreeFam" id="TF328848"/>
<dbReference type="Reactome" id="R-MMU-3214847">
    <property type="pathway name" value="HATs acetylate histones"/>
</dbReference>
<dbReference type="UniPathway" id="UPA00143"/>
<dbReference type="BioGRID-ORCS" id="77853">
    <property type="hits" value="7 hits in 55 CRISPR screens"/>
</dbReference>
<dbReference type="ChiTaRS" id="Msl2">
    <property type="organism name" value="mouse"/>
</dbReference>
<dbReference type="PRO" id="PR:Q69ZF8"/>
<dbReference type="Proteomes" id="UP000000589">
    <property type="component" value="Chromosome 9"/>
</dbReference>
<dbReference type="RNAct" id="Q69ZF8">
    <property type="molecule type" value="protein"/>
</dbReference>
<dbReference type="Bgee" id="ENSMUSG00000066415">
    <property type="expression patterns" value="Expressed in rostral migratory stream and 248 other cell types or tissues"/>
</dbReference>
<dbReference type="ExpressionAtlas" id="Q69ZF8">
    <property type="expression patterns" value="baseline and differential"/>
</dbReference>
<dbReference type="GO" id="GO:0000785">
    <property type="term" value="C:chromatin"/>
    <property type="evidence" value="ECO:0000250"/>
    <property type="project" value="UniProtKB"/>
</dbReference>
<dbReference type="GO" id="GO:0072487">
    <property type="term" value="C:MSL complex"/>
    <property type="evidence" value="ECO:0000314"/>
    <property type="project" value="UniProtKB"/>
</dbReference>
<dbReference type="GO" id="GO:0005634">
    <property type="term" value="C:nucleus"/>
    <property type="evidence" value="ECO:0000315"/>
    <property type="project" value="UniProtKB"/>
</dbReference>
<dbReference type="GO" id="GO:0141054">
    <property type="term" value="F:histone H2B ubiquitin ligase activity"/>
    <property type="evidence" value="ECO:0000315"/>
    <property type="project" value="UniProtKB"/>
</dbReference>
<dbReference type="GO" id="GO:0140585">
    <property type="term" value="F:promoter-enhancer loop anchoring activity"/>
    <property type="evidence" value="ECO:0000315"/>
    <property type="project" value="UniProtKB"/>
</dbReference>
<dbReference type="GO" id="GO:0061630">
    <property type="term" value="F:ubiquitin protein ligase activity"/>
    <property type="evidence" value="ECO:0000250"/>
    <property type="project" value="UniProtKB"/>
</dbReference>
<dbReference type="GO" id="GO:0008270">
    <property type="term" value="F:zinc ion binding"/>
    <property type="evidence" value="ECO:0007669"/>
    <property type="project" value="UniProtKB-KW"/>
</dbReference>
<dbReference type="GO" id="GO:0006974">
    <property type="term" value="P:DNA damage response"/>
    <property type="evidence" value="ECO:0000250"/>
    <property type="project" value="UniProtKB"/>
</dbReference>
<dbReference type="GO" id="GO:0040029">
    <property type="term" value="P:epigenetic regulation of gene expression"/>
    <property type="evidence" value="ECO:0000315"/>
    <property type="project" value="UniProtKB"/>
</dbReference>
<dbReference type="GO" id="GO:0045893">
    <property type="term" value="P:positive regulation of DNA-templated transcription"/>
    <property type="evidence" value="ECO:0000315"/>
    <property type="project" value="ComplexPortal"/>
</dbReference>
<dbReference type="GO" id="GO:0006513">
    <property type="term" value="P:protein monoubiquitination"/>
    <property type="evidence" value="ECO:0000250"/>
    <property type="project" value="UniProtKB"/>
</dbReference>
<dbReference type="CDD" id="cd13122">
    <property type="entry name" value="MSL2_CXC"/>
    <property type="match status" value="1"/>
</dbReference>
<dbReference type="CDD" id="cd16522">
    <property type="entry name" value="RING-HC_MSL2"/>
    <property type="match status" value="1"/>
</dbReference>
<dbReference type="FunFam" id="3.30.40.10:FF:000174">
    <property type="entry name" value="E3 ubiquitin-protein ligase MSL2"/>
    <property type="match status" value="1"/>
</dbReference>
<dbReference type="Gene3D" id="3.30.40.10">
    <property type="entry name" value="Zinc/RING finger domain, C3HC4 (zinc finger)"/>
    <property type="match status" value="1"/>
</dbReference>
<dbReference type="InterPro" id="IPR037922">
    <property type="entry name" value="MSL2"/>
</dbReference>
<dbReference type="InterPro" id="IPR032049">
    <property type="entry name" value="Msl2-CXC"/>
</dbReference>
<dbReference type="InterPro" id="IPR032043">
    <property type="entry name" value="Msl2_Znf-RING"/>
</dbReference>
<dbReference type="InterPro" id="IPR033467">
    <property type="entry name" value="Tesmin/TSO1-like_CXC"/>
</dbReference>
<dbReference type="InterPro" id="IPR001841">
    <property type="entry name" value="Znf_RING"/>
</dbReference>
<dbReference type="InterPro" id="IPR013083">
    <property type="entry name" value="Znf_RING/FYVE/PHD"/>
</dbReference>
<dbReference type="PANTHER" id="PTHR16048:SF3">
    <property type="entry name" value="E3 UBIQUITIN-PROTEIN LIGASE MSL2"/>
    <property type="match status" value="1"/>
</dbReference>
<dbReference type="PANTHER" id="PTHR16048">
    <property type="entry name" value="MSL2-RELATED"/>
    <property type="match status" value="1"/>
</dbReference>
<dbReference type="Pfam" id="PF16682">
    <property type="entry name" value="MSL2-CXC"/>
    <property type="match status" value="1"/>
</dbReference>
<dbReference type="Pfam" id="PF16685">
    <property type="entry name" value="zf-RING_10"/>
    <property type="match status" value="1"/>
</dbReference>
<dbReference type="SMART" id="SM01114">
    <property type="entry name" value="CXC"/>
    <property type="match status" value="1"/>
</dbReference>
<dbReference type="SUPFAM" id="SSF57850">
    <property type="entry name" value="RING/U-box"/>
    <property type="match status" value="1"/>
</dbReference>
<dbReference type="PROSITE" id="PS52051">
    <property type="entry name" value="CXC_MSL2"/>
    <property type="match status" value="1"/>
</dbReference>
<dbReference type="PROSITE" id="PS50089">
    <property type="entry name" value="ZF_RING_2"/>
    <property type="match status" value="1"/>
</dbReference>
<feature type="chain" id="PRO_0000299537" description="E3 ubiquitin-protein ligase MSL2">
    <location>
        <begin position="1"/>
        <end position="577"/>
    </location>
</feature>
<feature type="domain" description="CXC MSL2-type" evidence="4">
    <location>
        <begin position="457"/>
        <end position="508"/>
    </location>
</feature>
<feature type="zinc finger region" description="RING-type" evidence="3">
    <location>
        <begin position="44"/>
        <end position="85"/>
    </location>
</feature>
<feature type="region of interest" description="Sufficient for interaction with MSL1" evidence="2">
    <location>
        <begin position="1"/>
        <end position="116"/>
    </location>
</feature>
<feature type="region of interest" description="Disordered" evidence="5">
    <location>
        <begin position="405"/>
        <end position="428"/>
    </location>
</feature>
<feature type="compositionally biased region" description="Basic residues" evidence="5">
    <location>
        <begin position="407"/>
        <end position="423"/>
    </location>
</feature>
<feature type="binding site" evidence="2">
    <location>
        <position position="44"/>
    </location>
    <ligand>
        <name>Zn(2+)</name>
        <dbReference type="ChEBI" id="CHEBI:29105"/>
        <label>1</label>
    </ligand>
</feature>
<feature type="binding site" evidence="2">
    <location>
        <position position="47"/>
    </location>
    <ligand>
        <name>Zn(2+)</name>
        <dbReference type="ChEBI" id="CHEBI:29105"/>
        <label>1</label>
    </ligand>
</feature>
<feature type="binding site" evidence="2">
    <location>
        <position position="62"/>
    </location>
    <ligand>
        <name>Zn(2+)</name>
        <dbReference type="ChEBI" id="CHEBI:29105"/>
        <label>2</label>
    </ligand>
</feature>
<feature type="binding site" evidence="2">
    <location>
        <position position="64"/>
    </location>
    <ligand>
        <name>Zn(2+)</name>
        <dbReference type="ChEBI" id="CHEBI:29105"/>
        <label>2</label>
    </ligand>
</feature>
<feature type="binding site" evidence="2">
    <location>
        <position position="67"/>
    </location>
    <ligand>
        <name>Zn(2+)</name>
        <dbReference type="ChEBI" id="CHEBI:29105"/>
        <label>1</label>
    </ligand>
</feature>
<feature type="binding site" evidence="2">
    <location>
        <position position="70"/>
    </location>
    <ligand>
        <name>Zn(2+)</name>
        <dbReference type="ChEBI" id="CHEBI:29105"/>
        <label>1</label>
    </ligand>
</feature>
<feature type="binding site" evidence="2">
    <location>
        <position position="81"/>
    </location>
    <ligand>
        <name>Zn(2+)</name>
        <dbReference type="ChEBI" id="CHEBI:29105"/>
        <label>2</label>
    </ligand>
</feature>
<feature type="binding site" evidence="2">
    <location>
        <position position="84"/>
    </location>
    <ligand>
        <name>Zn(2+)</name>
        <dbReference type="ChEBI" id="CHEBI:29105"/>
        <label>2</label>
    </ligand>
</feature>
<feature type="binding site" evidence="4">
    <location>
        <position position="462"/>
    </location>
    <ligand>
        <name>Zn(2+)</name>
        <dbReference type="ChEBI" id="CHEBI:29105"/>
        <label>3</label>
    </ligand>
</feature>
<feature type="binding site" evidence="4">
    <location>
        <position position="462"/>
    </location>
    <ligand>
        <name>Zn(2+)</name>
        <dbReference type="ChEBI" id="CHEBI:29105"/>
        <label>4</label>
    </ligand>
</feature>
<feature type="binding site" evidence="4">
    <location>
        <position position="464"/>
    </location>
    <ligand>
        <name>Zn(2+)</name>
        <dbReference type="ChEBI" id="CHEBI:29105"/>
        <label>3</label>
    </ligand>
</feature>
<feature type="binding site" evidence="4">
    <location>
        <position position="476"/>
    </location>
    <ligand>
        <name>Zn(2+)</name>
        <dbReference type="ChEBI" id="CHEBI:29105"/>
        <label>3</label>
    </ligand>
</feature>
<feature type="binding site" evidence="4">
    <location>
        <position position="476"/>
    </location>
    <ligand>
        <name>Zn(2+)</name>
        <dbReference type="ChEBI" id="CHEBI:29105"/>
        <label>5</label>
    </ligand>
</feature>
<feature type="binding site" evidence="4">
    <location>
        <position position="481"/>
    </location>
    <ligand>
        <name>Zn(2+)</name>
        <dbReference type="ChEBI" id="CHEBI:29105"/>
        <label>3</label>
    </ligand>
</feature>
<feature type="binding site" evidence="4">
    <location>
        <position position="483"/>
    </location>
    <ligand>
        <name>Zn(2+)</name>
        <dbReference type="ChEBI" id="CHEBI:29105"/>
        <label>4</label>
    </ligand>
</feature>
<feature type="binding site" evidence="4">
    <location>
        <position position="490"/>
    </location>
    <ligand>
        <name>Zn(2+)</name>
        <dbReference type="ChEBI" id="CHEBI:29105"/>
        <label>4</label>
    </ligand>
</feature>
<feature type="binding site" evidence="4">
    <location>
        <position position="490"/>
    </location>
    <ligand>
        <name>Zn(2+)</name>
        <dbReference type="ChEBI" id="CHEBI:29105"/>
        <label>5</label>
    </ligand>
</feature>
<feature type="binding site" evidence="4">
    <location>
        <position position="493"/>
    </location>
    <ligand>
        <name>Zn(2+)</name>
        <dbReference type="ChEBI" id="CHEBI:29105"/>
        <label>4</label>
    </ligand>
</feature>
<feature type="binding site" evidence="4">
    <location>
        <position position="495"/>
    </location>
    <ligand>
        <name>Zn(2+)</name>
        <dbReference type="ChEBI" id="CHEBI:29105"/>
        <label>5</label>
    </ligand>
</feature>
<feature type="binding site" evidence="4">
    <location>
        <position position="498"/>
    </location>
    <ligand>
        <name>Zn(2+)</name>
        <dbReference type="ChEBI" id="CHEBI:29105"/>
        <label>5</label>
    </ligand>
</feature>
<feature type="modified residue" description="Phosphoserine" evidence="2">
    <location>
        <position position="447"/>
    </location>
</feature>
<feature type="cross-link" description="Glycyl lysine isopeptide (Lys-Gly) (interchain with G-Cter in SUMO2)" evidence="2">
    <location>
        <position position="375"/>
    </location>
</feature>
<feature type="mutagenesis site" description="Abolished E3 ubiquitin ligase activity." evidence="7">
    <original>H</original>
    <variation>Y</variation>
    <location>
        <position position="64"/>
    </location>
</feature>